<sequence length="162" mass="18543">MKTVIYPGSFDPPTNGHLDIIQRAARVFDKVIVAVLNNPEKNPMFTVAERRKMLEMITKEYANVEIDDFNGLLVDYVREKQVSIVIKGLRAISDFENEMQMALTNRKLAPDIETIFMMTNHKCSFLSSSVVKEVVAFDGCIEGLVPEQIQDYIIEKRNSQRK</sequence>
<comment type="function">
    <text evidence="1">Reversibly transfers an adenylyl group from ATP to 4'-phosphopantetheine, yielding dephospho-CoA (dPCoA) and pyrophosphate.</text>
</comment>
<comment type="catalytic activity">
    <reaction evidence="1">
        <text>(R)-4'-phosphopantetheine + ATP + H(+) = 3'-dephospho-CoA + diphosphate</text>
        <dbReference type="Rhea" id="RHEA:19801"/>
        <dbReference type="ChEBI" id="CHEBI:15378"/>
        <dbReference type="ChEBI" id="CHEBI:30616"/>
        <dbReference type="ChEBI" id="CHEBI:33019"/>
        <dbReference type="ChEBI" id="CHEBI:57328"/>
        <dbReference type="ChEBI" id="CHEBI:61723"/>
        <dbReference type="EC" id="2.7.7.3"/>
    </reaction>
</comment>
<comment type="cofactor">
    <cofactor evidence="1">
        <name>Mg(2+)</name>
        <dbReference type="ChEBI" id="CHEBI:18420"/>
    </cofactor>
</comment>
<comment type="pathway">
    <text evidence="1">Cofactor biosynthesis; coenzyme A biosynthesis; CoA from (R)-pantothenate: step 4/5.</text>
</comment>
<comment type="subunit">
    <text evidence="1">Homohexamer.</text>
</comment>
<comment type="subcellular location">
    <subcellularLocation>
        <location evidence="1">Cytoplasm</location>
    </subcellularLocation>
</comment>
<comment type="similarity">
    <text evidence="1">Belongs to the bacterial CoaD family.</text>
</comment>
<protein>
    <recommendedName>
        <fullName evidence="1">Phosphopantetheine adenylyltransferase</fullName>
        <ecNumber evidence="1">2.7.7.3</ecNumber>
    </recommendedName>
    <alternativeName>
        <fullName evidence="1">Dephospho-CoA pyrophosphorylase</fullName>
    </alternativeName>
    <alternativeName>
        <fullName evidence="1">Pantetheine-phosphate adenylyltransferase</fullName>
        <shortName evidence="1">PPAT</shortName>
    </alternativeName>
</protein>
<reference key="1">
    <citation type="submission" date="2008-04" db="EMBL/GenBank/DDBJ databases">
        <title>Complete sequence of chromosome of Natranaerobius thermophilus JW/NM-WN-LF.</title>
        <authorList>
            <consortium name="US DOE Joint Genome Institute"/>
            <person name="Copeland A."/>
            <person name="Lucas S."/>
            <person name="Lapidus A."/>
            <person name="Glavina del Rio T."/>
            <person name="Dalin E."/>
            <person name="Tice H."/>
            <person name="Bruce D."/>
            <person name="Goodwin L."/>
            <person name="Pitluck S."/>
            <person name="Chertkov O."/>
            <person name="Brettin T."/>
            <person name="Detter J.C."/>
            <person name="Han C."/>
            <person name="Kuske C.R."/>
            <person name="Schmutz J."/>
            <person name="Larimer F."/>
            <person name="Land M."/>
            <person name="Hauser L."/>
            <person name="Kyrpides N."/>
            <person name="Lykidis A."/>
            <person name="Mesbah N.M."/>
            <person name="Wiegel J."/>
        </authorList>
    </citation>
    <scope>NUCLEOTIDE SEQUENCE [LARGE SCALE GENOMIC DNA]</scope>
    <source>
        <strain>ATCC BAA-1301 / DSM 18059 / JW/NM-WN-LF</strain>
    </source>
</reference>
<proteinExistence type="inferred from homology"/>
<dbReference type="EC" id="2.7.7.3" evidence="1"/>
<dbReference type="EMBL" id="CP001034">
    <property type="protein sequence ID" value="ACB84932.1"/>
    <property type="molecule type" value="Genomic_DNA"/>
</dbReference>
<dbReference type="RefSeq" id="WP_012447807.1">
    <property type="nucleotide sequence ID" value="NC_010718.1"/>
</dbReference>
<dbReference type="SMR" id="B2A2L7"/>
<dbReference type="FunCoup" id="B2A2L7">
    <property type="interactions" value="415"/>
</dbReference>
<dbReference type="STRING" id="457570.Nther_1349"/>
<dbReference type="KEGG" id="nth:Nther_1349"/>
<dbReference type="eggNOG" id="COG0669">
    <property type="taxonomic scope" value="Bacteria"/>
</dbReference>
<dbReference type="HOGENOM" id="CLU_100149_0_1_9"/>
<dbReference type="InParanoid" id="B2A2L7"/>
<dbReference type="OrthoDB" id="9806661at2"/>
<dbReference type="UniPathway" id="UPA00241">
    <property type="reaction ID" value="UER00355"/>
</dbReference>
<dbReference type="Proteomes" id="UP000001683">
    <property type="component" value="Chromosome"/>
</dbReference>
<dbReference type="GO" id="GO:0005737">
    <property type="term" value="C:cytoplasm"/>
    <property type="evidence" value="ECO:0007669"/>
    <property type="project" value="UniProtKB-SubCell"/>
</dbReference>
<dbReference type="GO" id="GO:0005524">
    <property type="term" value="F:ATP binding"/>
    <property type="evidence" value="ECO:0007669"/>
    <property type="project" value="UniProtKB-KW"/>
</dbReference>
<dbReference type="GO" id="GO:0004595">
    <property type="term" value="F:pantetheine-phosphate adenylyltransferase activity"/>
    <property type="evidence" value="ECO:0007669"/>
    <property type="project" value="UniProtKB-UniRule"/>
</dbReference>
<dbReference type="GO" id="GO:0015937">
    <property type="term" value="P:coenzyme A biosynthetic process"/>
    <property type="evidence" value="ECO:0007669"/>
    <property type="project" value="UniProtKB-UniRule"/>
</dbReference>
<dbReference type="CDD" id="cd02163">
    <property type="entry name" value="PPAT"/>
    <property type="match status" value="1"/>
</dbReference>
<dbReference type="Gene3D" id="3.40.50.620">
    <property type="entry name" value="HUPs"/>
    <property type="match status" value="1"/>
</dbReference>
<dbReference type="HAMAP" id="MF_00151">
    <property type="entry name" value="PPAT_bact"/>
    <property type="match status" value="1"/>
</dbReference>
<dbReference type="InterPro" id="IPR004821">
    <property type="entry name" value="Cyt_trans-like"/>
</dbReference>
<dbReference type="InterPro" id="IPR001980">
    <property type="entry name" value="PPAT"/>
</dbReference>
<dbReference type="InterPro" id="IPR014729">
    <property type="entry name" value="Rossmann-like_a/b/a_fold"/>
</dbReference>
<dbReference type="NCBIfam" id="TIGR01510">
    <property type="entry name" value="coaD_prev_kdtB"/>
    <property type="match status" value="1"/>
</dbReference>
<dbReference type="NCBIfam" id="TIGR00125">
    <property type="entry name" value="cyt_tran_rel"/>
    <property type="match status" value="1"/>
</dbReference>
<dbReference type="PANTHER" id="PTHR21342">
    <property type="entry name" value="PHOSPHOPANTETHEINE ADENYLYLTRANSFERASE"/>
    <property type="match status" value="1"/>
</dbReference>
<dbReference type="PANTHER" id="PTHR21342:SF1">
    <property type="entry name" value="PHOSPHOPANTETHEINE ADENYLYLTRANSFERASE"/>
    <property type="match status" value="1"/>
</dbReference>
<dbReference type="Pfam" id="PF01467">
    <property type="entry name" value="CTP_transf_like"/>
    <property type="match status" value="1"/>
</dbReference>
<dbReference type="PRINTS" id="PR01020">
    <property type="entry name" value="LPSBIOSNTHSS"/>
</dbReference>
<dbReference type="SUPFAM" id="SSF52374">
    <property type="entry name" value="Nucleotidylyl transferase"/>
    <property type="match status" value="1"/>
</dbReference>
<gene>
    <name evidence="1" type="primary">coaD</name>
    <name type="ordered locus">Nther_1349</name>
</gene>
<accession>B2A2L7</accession>
<evidence type="ECO:0000255" key="1">
    <source>
        <dbReference type="HAMAP-Rule" id="MF_00151"/>
    </source>
</evidence>
<keyword id="KW-0067">ATP-binding</keyword>
<keyword id="KW-0173">Coenzyme A biosynthesis</keyword>
<keyword id="KW-0963">Cytoplasm</keyword>
<keyword id="KW-0460">Magnesium</keyword>
<keyword id="KW-0547">Nucleotide-binding</keyword>
<keyword id="KW-0548">Nucleotidyltransferase</keyword>
<keyword id="KW-1185">Reference proteome</keyword>
<keyword id="KW-0808">Transferase</keyword>
<name>COAD_NATTJ</name>
<organism>
    <name type="scientific">Natranaerobius thermophilus (strain ATCC BAA-1301 / DSM 18059 / JW/NM-WN-LF)</name>
    <dbReference type="NCBI Taxonomy" id="457570"/>
    <lineage>
        <taxon>Bacteria</taxon>
        <taxon>Bacillati</taxon>
        <taxon>Bacillota</taxon>
        <taxon>Clostridia</taxon>
        <taxon>Natranaerobiales</taxon>
        <taxon>Natranaerobiaceae</taxon>
        <taxon>Natranaerobius</taxon>
    </lineage>
</organism>
<feature type="chain" id="PRO_1000096817" description="Phosphopantetheine adenylyltransferase">
    <location>
        <begin position="1"/>
        <end position="162"/>
    </location>
</feature>
<feature type="binding site" evidence="1">
    <location>
        <begin position="9"/>
        <end position="10"/>
    </location>
    <ligand>
        <name>ATP</name>
        <dbReference type="ChEBI" id="CHEBI:30616"/>
    </ligand>
</feature>
<feature type="binding site" evidence="1">
    <location>
        <position position="9"/>
    </location>
    <ligand>
        <name>substrate</name>
    </ligand>
</feature>
<feature type="binding site" evidence="1">
    <location>
        <position position="17"/>
    </location>
    <ligand>
        <name>ATP</name>
        <dbReference type="ChEBI" id="CHEBI:30616"/>
    </ligand>
</feature>
<feature type="binding site" evidence="1">
    <location>
        <position position="41"/>
    </location>
    <ligand>
        <name>substrate</name>
    </ligand>
</feature>
<feature type="binding site" evidence="1">
    <location>
        <position position="73"/>
    </location>
    <ligand>
        <name>substrate</name>
    </ligand>
</feature>
<feature type="binding site" evidence="1">
    <location>
        <position position="87"/>
    </location>
    <ligand>
        <name>substrate</name>
    </ligand>
</feature>
<feature type="binding site" evidence="1">
    <location>
        <begin position="88"/>
        <end position="90"/>
    </location>
    <ligand>
        <name>ATP</name>
        <dbReference type="ChEBI" id="CHEBI:30616"/>
    </ligand>
</feature>
<feature type="binding site" evidence="1">
    <location>
        <position position="98"/>
    </location>
    <ligand>
        <name>ATP</name>
        <dbReference type="ChEBI" id="CHEBI:30616"/>
    </ligand>
</feature>
<feature type="binding site" evidence="1">
    <location>
        <begin position="123"/>
        <end position="129"/>
    </location>
    <ligand>
        <name>ATP</name>
        <dbReference type="ChEBI" id="CHEBI:30616"/>
    </ligand>
</feature>
<feature type="site" description="Transition state stabilizer" evidence="1">
    <location>
        <position position="17"/>
    </location>
</feature>